<protein>
    <recommendedName>
        <fullName>Phycoerythrobilin:ferredoxin oxidoreductase</fullName>
        <ecNumber>1.3.7.3</ecNumber>
    </recommendedName>
</protein>
<sequence>MSIDLRASSLDPVQIPGWRWQPFLDEASAALKPFNPSPYPIAETFLQKEGSTGSKAKPVPVTTATWACSTDKLRQVRCACVEAGMAASVLNFVINPSCRFDLPFFGADLVTLPNGHLLALDLQPVDKADPDHTQPVWERLMPLFERWQAELPDGGPIPEEAQPYFSPAFLWTRIPLGEEGDELIERVIRPAFIDYLQLYLNLVAEAEPVSDDRAELLLSGQKRYTAYRAEKDPARGMLTRFYGSEWTESYIHGVLFDLEDAA</sequence>
<dbReference type="EC" id="1.3.7.3"/>
<dbReference type="EMBL" id="BX569694">
    <property type="protein sequence ID" value="CAE08536.1"/>
    <property type="molecule type" value="Genomic_DNA"/>
</dbReference>
<dbReference type="RefSeq" id="WP_011128879.1">
    <property type="nucleotide sequence ID" value="NC_005070.1"/>
</dbReference>
<dbReference type="SMR" id="Q7U4P6"/>
<dbReference type="STRING" id="84588.SYNW2021"/>
<dbReference type="KEGG" id="syw:SYNW2021"/>
<dbReference type="eggNOG" id="ENOG502Z8GK">
    <property type="taxonomic scope" value="Bacteria"/>
</dbReference>
<dbReference type="HOGENOM" id="CLU_086208_1_0_3"/>
<dbReference type="BioCyc" id="MetaCyc:MONOMER-18995"/>
<dbReference type="Proteomes" id="UP000001422">
    <property type="component" value="Chromosome"/>
</dbReference>
<dbReference type="GO" id="GO:0050897">
    <property type="term" value="F:cobalt ion binding"/>
    <property type="evidence" value="ECO:0007669"/>
    <property type="project" value="InterPro"/>
</dbReference>
<dbReference type="GO" id="GO:0050618">
    <property type="term" value="F:phycoerythrobilin:ferredoxin oxidoreductase activity"/>
    <property type="evidence" value="ECO:0007669"/>
    <property type="project" value="UniProtKB-UniRule"/>
</dbReference>
<dbReference type="GO" id="GO:0010024">
    <property type="term" value="P:phytochromobilin biosynthetic process"/>
    <property type="evidence" value="ECO:0007669"/>
    <property type="project" value="InterPro"/>
</dbReference>
<dbReference type="Gene3D" id="3.40.1500.20">
    <property type="match status" value="1"/>
</dbReference>
<dbReference type="HAMAP" id="MF_00793">
    <property type="entry name" value="PebB"/>
    <property type="match status" value="1"/>
</dbReference>
<dbReference type="InterPro" id="IPR009249">
    <property type="entry name" value="Ferredoxin-dep_bilin_Rdtase"/>
</dbReference>
<dbReference type="InterPro" id="IPR022827">
    <property type="entry name" value="Phycoerythrobilin_Fdx_Rdtase"/>
</dbReference>
<dbReference type="NCBIfam" id="NF009722">
    <property type="entry name" value="PRK13249.1"/>
    <property type="match status" value="1"/>
</dbReference>
<dbReference type="PANTHER" id="PTHR34557">
    <property type="entry name" value="PHYTOCHROMOBILIN:FERREDOXIN OXIDOREDUCTASE, CHLOROPLASTIC"/>
    <property type="match status" value="1"/>
</dbReference>
<dbReference type="PANTHER" id="PTHR34557:SF1">
    <property type="entry name" value="PHYTOCHROMOBILIN:FERREDOXIN OXIDOREDUCTASE, CHLOROPLASTIC"/>
    <property type="match status" value="1"/>
</dbReference>
<dbReference type="Pfam" id="PF05996">
    <property type="entry name" value="Fe_bilin_red"/>
    <property type="match status" value="1"/>
</dbReference>
<reference key="1">
    <citation type="journal article" date="2003" name="Nature">
        <title>The genome of a motile marine Synechococcus.</title>
        <authorList>
            <person name="Palenik B."/>
            <person name="Brahamsha B."/>
            <person name="Larimer F.W."/>
            <person name="Land M.L."/>
            <person name="Hauser L."/>
            <person name="Chain P."/>
            <person name="Lamerdin J.E."/>
            <person name="Regala W."/>
            <person name="Allen E.E."/>
            <person name="McCarren J."/>
            <person name="Paulsen I.T."/>
            <person name="Dufresne A."/>
            <person name="Partensky F."/>
            <person name="Webb E.A."/>
            <person name="Waterbury J."/>
        </authorList>
    </citation>
    <scope>NUCLEOTIDE SEQUENCE [LARGE SCALE GENOMIC DNA]</scope>
    <source>
        <strain>WH8102</strain>
    </source>
</reference>
<name>PEBB_PARMW</name>
<organism>
    <name type="scientific">Parasynechococcus marenigrum (strain WH8102)</name>
    <dbReference type="NCBI Taxonomy" id="84588"/>
    <lineage>
        <taxon>Bacteria</taxon>
        <taxon>Bacillati</taxon>
        <taxon>Cyanobacteriota</taxon>
        <taxon>Cyanophyceae</taxon>
        <taxon>Synechococcales</taxon>
        <taxon>Prochlorococcaceae</taxon>
        <taxon>Parasynechococcus</taxon>
        <taxon>Parasynechococcus marenigrum</taxon>
    </lineage>
</organism>
<comment type="function">
    <text evidence="1">Catalyzes the two-electron reduction of the C2 and C3(1) diene system of 15,16-dihydrobiliverdin.</text>
</comment>
<comment type="catalytic activity">
    <reaction>
        <text>(3Z)-phycoerythrobilin + oxidized 2[4Fe-4S]-[ferredoxin] = 15,16-dihydrobiliverdin + reduced 2[4Fe-4S]-[ferredoxin] + 2 H(+)</text>
        <dbReference type="Rhea" id="RHEA:22092"/>
        <dbReference type="Rhea" id="RHEA-COMP:10002"/>
        <dbReference type="Rhea" id="RHEA-COMP:10004"/>
        <dbReference type="ChEBI" id="CHEBI:15378"/>
        <dbReference type="ChEBI" id="CHEBI:33722"/>
        <dbReference type="ChEBI" id="CHEBI:33723"/>
        <dbReference type="ChEBI" id="CHEBI:57438"/>
        <dbReference type="ChEBI" id="CHEBI:57899"/>
        <dbReference type="EC" id="1.3.7.3"/>
    </reaction>
</comment>
<comment type="similarity">
    <text evidence="2">Belongs to the HY2 family.</text>
</comment>
<feature type="chain" id="PRO_0000216736" description="Phycoerythrobilin:ferredoxin oxidoreductase">
    <location>
        <begin position="1"/>
        <end position="262"/>
    </location>
</feature>
<accession>Q7U4P6</accession>
<keyword id="KW-0560">Oxidoreductase</keyword>
<gene>
    <name type="primary">pebB</name>
    <name type="ordered locus">SYNW2021</name>
</gene>
<evidence type="ECO:0000250" key="1"/>
<evidence type="ECO:0000305" key="2"/>
<proteinExistence type="inferred from homology"/>